<accession>A6RUY7</accession>
<accession>A0A384JEG5</accession>
<proteinExistence type="inferred from homology"/>
<sequence>MPSLLFTCFLVQLLIHLVNTFGADAINNLLWNLYNMFPTPTSQSAGEQKKLKREFMKVRHEMNATSSQDEFAKWAKLRRQHDKLFDQLEKSKSSLDSTKSTFDSSVSTLRWLGTNGLRMLLQFWFSKQAMFWLPKGWFPYYAEWLLSFPRAPLGSISIQAWTLACAAVILLVSDALVAVVALALGTQTGAKAKKMEEPMKAGGQGTEKPGKKEL</sequence>
<organism>
    <name type="scientific">Botryotinia fuckeliana (strain B05.10)</name>
    <name type="common">Noble rot fungus</name>
    <name type="synonym">Botrytis cinerea</name>
    <dbReference type="NCBI Taxonomy" id="332648"/>
    <lineage>
        <taxon>Eukaryota</taxon>
        <taxon>Fungi</taxon>
        <taxon>Dikarya</taxon>
        <taxon>Ascomycota</taxon>
        <taxon>Pezizomycotina</taxon>
        <taxon>Leotiomycetes</taxon>
        <taxon>Helotiales</taxon>
        <taxon>Sclerotiniaceae</taxon>
        <taxon>Botrytis</taxon>
    </lineage>
</organism>
<protein>
    <recommendedName>
        <fullName evidence="1">Protein get1</fullName>
    </recommendedName>
    <alternativeName>
        <fullName evidence="1">Guided entry of tail-anchored proteins 1</fullName>
    </alternativeName>
</protein>
<feature type="chain" id="PRO_0000388581" description="Protein get1">
    <location>
        <begin position="1"/>
        <end position="214"/>
    </location>
</feature>
<feature type="topological domain" description="Lumenal" evidence="1">
    <location>
        <begin position="1"/>
        <end position="4"/>
    </location>
</feature>
<feature type="transmembrane region" description="Helical" evidence="1">
    <location>
        <begin position="5"/>
        <end position="24"/>
    </location>
</feature>
<feature type="topological domain" description="Cytoplasmic" evidence="1">
    <location>
        <begin position="25"/>
        <end position="110"/>
    </location>
</feature>
<feature type="transmembrane region" description="Helical" evidence="1">
    <location>
        <begin position="111"/>
        <end position="131"/>
    </location>
</feature>
<feature type="topological domain" description="Lumenal" evidence="1">
    <location>
        <begin position="132"/>
        <end position="155"/>
    </location>
</feature>
<feature type="transmembrane region" description="Helical" evidence="1">
    <location>
        <begin position="156"/>
        <end position="172"/>
    </location>
</feature>
<feature type="topological domain" description="Cytoplasmic" evidence="1">
    <location>
        <begin position="173"/>
        <end position="214"/>
    </location>
</feature>
<feature type="region of interest" description="Disordered" evidence="2">
    <location>
        <begin position="193"/>
        <end position="214"/>
    </location>
</feature>
<feature type="coiled-coil region" evidence="1">
    <location>
        <begin position="75"/>
        <end position="97"/>
    </location>
</feature>
<comment type="function">
    <text evidence="1">Required for the post-translational delivery of tail-anchored (TA) proteins to the endoplasmic reticulum. Acts as a membrane receptor for soluble get3, which recognizes and selectively binds the transmembrane domain of TA proteins in the cytosol.</text>
</comment>
<comment type="subunit">
    <text evidence="1">Interacts with get3.</text>
</comment>
<comment type="subcellular location">
    <subcellularLocation>
        <location evidence="1">Endoplasmic reticulum membrane</location>
        <topology evidence="1">Multi-pass membrane protein</topology>
    </subcellularLocation>
</comment>
<comment type="similarity">
    <text evidence="1">Belongs to the WRB/GET1 family.</text>
</comment>
<evidence type="ECO:0000255" key="1">
    <source>
        <dbReference type="HAMAP-Rule" id="MF_03113"/>
    </source>
</evidence>
<evidence type="ECO:0000256" key="2">
    <source>
        <dbReference type="SAM" id="MobiDB-lite"/>
    </source>
</evidence>
<dbReference type="EMBL" id="CP009808">
    <property type="protein sequence ID" value="ATZ48998.1"/>
    <property type="molecule type" value="Genomic_DNA"/>
</dbReference>
<dbReference type="SMR" id="A6RUY7"/>
<dbReference type="EnsemblFungi" id="Bcin04g02040.1">
    <property type="protein sequence ID" value="Bcin04p02040.1"/>
    <property type="gene ID" value="Bcin04g02040"/>
</dbReference>
<dbReference type="VEuPathDB" id="FungiDB:Bcin04g02040"/>
<dbReference type="OrthoDB" id="69461at2759"/>
<dbReference type="Proteomes" id="UP000001798">
    <property type="component" value="Chromosome bcin04"/>
</dbReference>
<dbReference type="GO" id="GO:0005789">
    <property type="term" value="C:endoplasmic reticulum membrane"/>
    <property type="evidence" value="ECO:0007669"/>
    <property type="project" value="UniProtKB-SubCell"/>
</dbReference>
<dbReference type="GO" id="GO:0043529">
    <property type="term" value="C:GET complex"/>
    <property type="evidence" value="ECO:0007669"/>
    <property type="project" value="InterPro"/>
</dbReference>
<dbReference type="GO" id="GO:0043495">
    <property type="term" value="F:protein-membrane adaptor activity"/>
    <property type="evidence" value="ECO:0007669"/>
    <property type="project" value="TreeGrafter"/>
</dbReference>
<dbReference type="GO" id="GO:0071816">
    <property type="term" value="P:tail-anchored membrane protein insertion into ER membrane"/>
    <property type="evidence" value="ECO:0007669"/>
    <property type="project" value="InterPro"/>
</dbReference>
<dbReference type="FunFam" id="1.10.287.660:FF:000006">
    <property type="entry name" value="Protein GET1"/>
    <property type="match status" value="1"/>
</dbReference>
<dbReference type="Gene3D" id="1.10.287.660">
    <property type="entry name" value="Helix hairpin bin"/>
    <property type="match status" value="1"/>
</dbReference>
<dbReference type="HAMAP" id="MF_03113">
    <property type="entry name" value="Get1"/>
    <property type="match status" value="1"/>
</dbReference>
<dbReference type="InterPro" id="IPR028945">
    <property type="entry name" value="Get1"/>
</dbReference>
<dbReference type="InterPro" id="IPR027538">
    <property type="entry name" value="Get1_fungi"/>
</dbReference>
<dbReference type="InterPro" id="IPR029012">
    <property type="entry name" value="Helix_hairpin_bin_sf"/>
</dbReference>
<dbReference type="PANTHER" id="PTHR42650:SF1">
    <property type="entry name" value="GUIDED ENTRY OF TAIL-ANCHORED PROTEINS FACTOR 1"/>
    <property type="match status" value="1"/>
</dbReference>
<dbReference type="PANTHER" id="PTHR42650">
    <property type="entry name" value="TAIL-ANCHORED PROTEIN INSERTION RECEPTOR WRB"/>
    <property type="match status" value="1"/>
</dbReference>
<dbReference type="Pfam" id="PF04420">
    <property type="entry name" value="CHD5"/>
    <property type="match status" value="1"/>
</dbReference>
<name>GET1_BOTFB</name>
<reference key="1">
    <citation type="journal article" date="2011" name="PLoS Genet.">
        <title>Genomic analysis of the necrotrophic fungal pathogens Sclerotinia sclerotiorum and Botrytis cinerea.</title>
        <authorList>
            <person name="Amselem J."/>
            <person name="Cuomo C.A."/>
            <person name="van Kan J.A.L."/>
            <person name="Viaud M."/>
            <person name="Benito E.P."/>
            <person name="Couloux A."/>
            <person name="Coutinho P.M."/>
            <person name="de Vries R.P."/>
            <person name="Dyer P.S."/>
            <person name="Fillinger S."/>
            <person name="Fournier E."/>
            <person name="Gout L."/>
            <person name="Hahn M."/>
            <person name="Kohn L."/>
            <person name="Lapalu N."/>
            <person name="Plummer K.M."/>
            <person name="Pradier J.-M."/>
            <person name="Quevillon E."/>
            <person name="Sharon A."/>
            <person name="Simon A."/>
            <person name="ten Have A."/>
            <person name="Tudzynski B."/>
            <person name="Tudzynski P."/>
            <person name="Wincker P."/>
            <person name="Andrew M."/>
            <person name="Anthouard V."/>
            <person name="Beever R.E."/>
            <person name="Beffa R."/>
            <person name="Benoit I."/>
            <person name="Bouzid O."/>
            <person name="Brault B."/>
            <person name="Chen Z."/>
            <person name="Choquer M."/>
            <person name="Collemare J."/>
            <person name="Cotton P."/>
            <person name="Danchin E.G."/>
            <person name="Da Silva C."/>
            <person name="Gautier A."/>
            <person name="Giraud C."/>
            <person name="Giraud T."/>
            <person name="Gonzalez C."/>
            <person name="Grossetete S."/>
            <person name="Gueldener U."/>
            <person name="Henrissat B."/>
            <person name="Howlett B.J."/>
            <person name="Kodira C."/>
            <person name="Kretschmer M."/>
            <person name="Lappartient A."/>
            <person name="Leroch M."/>
            <person name="Levis C."/>
            <person name="Mauceli E."/>
            <person name="Neuveglise C."/>
            <person name="Oeser B."/>
            <person name="Pearson M."/>
            <person name="Poulain J."/>
            <person name="Poussereau N."/>
            <person name="Quesneville H."/>
            <person name="Rascle C."/>
            <person name="Schumacher J."/>
            <person name="Segurens B."/>
            <person name="Sexton A."/>
            <person name="Silva E."/>
            <person name="Sirven C."/>
            <person name="Soanes D.M."/>
            <person name="Talbot N.J."/>
            <person name="Templeton M."/>
            <person name="Yandava C."/>
            <person name="Yarden O."/>
            <person name="Zeng Q."/>
            <person name="Rollins J.A."/>
            <person name="Lebrun M.-H."/>
            <person name="Dickman M."/>
        </authorList>
    </citation>
    <scope>NUCLEOTIDE SEQUENCE [LARGE SCALE GENOMIC DNA]</scope>
    <source>
        <strain>B05.10</strain>
    </source>
</reference>
<reference key="2">
    <citation type="journal article" date="2012" name="Eukaryot. Cell">
        <title>Genome update of Botrytis cinerea strains B05.10 and T4.</title>
        <authorList>
            <person name="Staats M."/>
            <person name="van Kan J.A.L."/>
        </authorList>
    </citation>
    <scope>NUCLEOTIDE SEQUENCE [LARGE SCALE GENOMIC DNA]</scope>
    <scope>GENOME REANNOTATION</scope>
    <source>
        <strain>B05.10</strain>
    </source>
</reference>
<reference key="3">
    <citation type="journal article" date="2017" name="Mol. Plant Pathol.">
        <title>A gapless genome sequence of the fungus Botrytis cinerea.</title>
        <authorList>
            <person name="van Kan J.A.L."/>
            <person name="Stassen J.H.M."/>
            <person name="Mosbach A."/>
            <person name="van der Lee T.A.J."/>
            <person name="Faino L."/>
            <person name="Farmer A.D."/>
            <person name="Papasotiriou D.G."/>
            <person name="Zhou S."/>
            <person name="Seidl M.F."/>
            <person name="Cottam E."/>
            <person name="Edel D."/>
            <person name="Hahn M."/>
            <person name="Schwartz D.C."/>
            <person name="Dietrich R.A."/>
            <person name="Widdison S."/>
            <person name="Scalliet G."/>
        </authorList>
    </citation>
    <scope>NUCLEOTIDE SEQUENCE [LARGE SCALE GENOMIC DNA]</scope>
    <scope>GENOME REANNOTATION</scope>
    <source>
        <strain>B05.10</strain>
    </source>
</reference>
<gene>
    <name type="primary">get1</name>
    <name type="ORF">BC1G_04578</name>
    <name type="ORF">BCIN_04g02040</name>
</gene>
<keyword id="KW-0175">Coiled coil</keyword>
<keyword id="KW-0256">Endoplasmic reticulum</keyword>
<keyword id="KW-0472">Membrane</keyword>
<keyword id="KW-1185">Reference proteome</keyword>
<keyword id="KW-0812">Transmembrane</keyword>
<keyword id="KW-1133">Transmembrane helix</keyword>
<keyword id="KW-0813">Transport</keyword>